<comment type="function">
    <text evidence="1">Snake venom metalloproteinase that impairs hemostasis in the envenomed animal.</text>
</comment>
<comment type="cofactor">
    <cofactor evidence="1">
        <name>Zn(2+)</name>
        <dbReference type="ChEBI" id="CHEBI:29105"/>
    </cofactor>
    <text evidence="1">Binds 1 zinc ion per subunit.</text>
</comment>
<comment type="subunit">
    <text evidence="1">Monomer.</text>
</comment>
<comment type="subcellular location">
    <subcellularLocation>
        <location evidence="1">Secreted</location>
    </subcellularLocation>
</comment>
<comment type="tissue specificity">
    <text>Expressed by the venom gland.</text>
</comment>
<comment type="similarity">
    <text evidence="5">Belongs to the venom metalloproteinase (M12B) family. P-II subfamily.</text>
</comment>
<evidence type="ECO:0000250" key="1"/>
<evidence type="ECO:0000255" key="2"/>
<evidence type="ECO:0000255" key="3">
    <source>
        <dbReference type="PROSITE-ProRule" id="PRU00276"/>
    </source>
</evidence>
<evidence type="ECO:0000255" key="4">
    <source>
        <dbReference type="PROSITE-ProRule" id="PRU10095"/>
    </source>
</evidence>
<evidence type="ECO:0000305" key="5"/>
<reference key="1">
    <citation type="submission" date="2010-12" db="EMBL/GenBank/DDBJ databases">
        <title>Purification, characterization and cloning of metalloproteinases from Trimeresurus mucrosquamatus Venom.</title>
        <authorList>
            <person name="Sun Q.Y."/>
            <person name="Bao J."/>
        </authorList>
    </citation>
    <scope>NUCLEOTIDE SEQUENCE [MRNA]</scope>
    <source>
        <tissue>Venom gland</tissue>
    </source>
</reference>
<protein>
    <recommendedName>
        <fullName>Zinc metalloproteinase/disintegrin</fullName>
    </recommendedName>
    <component>
        <recommendedName>
            <fullName>Snake venom metalloproteinase PMMP-3</fullName>
            <shortName>SVMP</shortName>
            <ecNumber>3.4.24.-</ecNumber>
        </recommendedName>
    </component>
</protein>
<name>VM2P3_PROMU</name>
<accession>E9NW28</accession>
<keyword id="KW-1015">Disulfide bond</keyword>
<keyword id="KW-1199">Hemostasis impairing toxin</keyword>
<keyword id="KW-0378">Hydrolase</keyword>
<keyword id="KW-0479">Metal-binding</keyword>
<keyword id="KW-0482">Metalloprotease</keyword>
<keyword id="KW-0645">Protease</keyword>
<keyword id="KW-0964">Secreted</keyword>
<keyword id="KW-0732">Signal</keyword>
<keyword id="KW-0800">Toxin</keyword>
<keyword id="KW-0862">Zinc</keyword>
<keyword id="KW-0865">Zymogen</keyword>
<organism>
    <name type="scientific">Protobothrops mucrosquamatus</name>
    <name type="common">Taiwan habu</name>
    <name type="synonym">Trimeresurus mucrosquamatus</name>
    <dbReference type="NCBI Taxonomy" id="103944"/>
    <lineage>
        <taxon>Eukaryota</taxon>
        <taxon>Metazoa</taxon>
        <taxon>Chordata</taxon>
        <taxon>Craniata</taxon>
        <taxon>Vertebrata</taxon>
        <taxon>Euteleostomi</taxon>
        <taxon>Lepidosauria</taxon>
        <taxon>Squamata</taxon>
        <taxon>Bifurcata</taxon>
        <taxon>Unidentata</taxon>
        <taxon>Episquamata</taxon>
        <taxon>Toxicofera</taxon>
        <taxon>Serpentes</taxon>
        <taxon>Colubroidea</taxon>
        <taxon>Viperidae</taxon>
        <taxon>Crotalinae</taxon>
        <taxon>Protobothrops</taxon>
    </lineage>
</organism>
<sequence length="411" mass="46459">MIEVLLVTICLAVFPYQGSSIILESGNVNDYEVVYPRKVSALPKGAVQPKYEDTMQYELKENGEPVVLHLEKNKGLFSEDYSETHYSPDGREITTYPSVEDHCYYHGRIHNDADSTASISACDGLKGYFKLQGQTYLIEPLKLPDSEAHAVFKYENIEKEDEAPKMCGVTQNWESDESIKKASQLYLTPEQQRFPQRYVKLAIVVDYRMYIKYNRDSNKITVRVHEMVNHVNEMYKPLNVAITLSLLRIWSTRDLITVQSDSKVTLGSFGDWRKTVLLKQQSHDCAHLLTDITFTKNVIGVAYKKGMCDPKLSVGLVQDYSSNVFVVAAIMTHELGHNLGMEHDEDENGKKCKCDTCIMSPAISDPPAQLFSDCSKNDYHTFLTNSKPQCILNAPLRTDTVSTPVSGNEPL</sequence>
<feature type="signal peptide" evidence="2">
    <location>
        <begin position="1"/>
        <end position="20"/>
    </location>
</feature>
<feature type="propeptide" id="PRO_0000417633" evidence="1">
    <location>
        <begin position="21"/>
        <end position="190"/>
    </location>
</feature>
<feature type="chain" id="PRO_0000417634" description="Snake venom metalloproteinase PMMP-3">
    <location>
        <begin position="191"/>
        <end position="395"/>
    </location>
</feature>
<feature type="propeptide" id="PRO_0000423371" evidence="1">
    <location>
        <begin position="396"/>
        <end position="411" status="greater than"/>
    </location>
</feature>
<feature type="domain" description="Peptidase M12B" evidence="3">
    <location>
        <begin position="197"/>
        <end position="395"/>
    </location>
</feature>
<feature type="active site" evidence="3 4">
    <location>
        <position position="334"/>
    </location>
</feature>
<feature type="binding site" evidence="1">
    <location>
        <position position="284"/>
    </location>
    <ligand>
        <name>Ca(2+)</name>
        <dbReference type="ChEBI" id="CHEBI:29108"/>
    </ligand>
</feature>
<feature type="binding site" evidence="1">
    <location>
        <position position="333"/>
    </location>
    <ligand>
        <name>Zn(2+)</name>
        <dbReference type="ChEBI" id="CHEBI:29105"/>
        <note>catalytic</note>
    </ligand>
</feature>
<feature type="binding site" evidence="1">
    <location>
        <position position="337"/>
    </location>
    <ligand>
        <name>Zn(2+)</name>
        <dbReference type="ChEBI" id="CHEBI:29105"/>
        <note>catalytic</note>
    </ligand>
</feature>
<feature type="binding site" evidence="1">
    <location>
        <position position="343"/>
    </location>
    <ligand>
        <name>Zn(2+)</name>
        <dbReference type="ChEBI" id="CHEBI:29105"/>
        <note>catalytic</note>
    </ligand>
</feature>
<feature type="binding site" evidence="1">
    <location>
        <position position="390"/>
    </location>
    <ligand>
        <name>Ca(2+)</name>
        <dbReference type="ChEBI" id="CHEBI:29108"/>
    </ligand>
</feature>
<feature type="binding site" evidence="1">
    <location>
        <position position="393"/>
    </location>
    <ligand>
        <name>Ca(2+)</name>
        <dbReference type="ChEBI" id="CHEBI:29108"/>
    </ligand>
</feature>
<feature type="disulfide bond" evidence="3">
    <location>
        <begin position="308"/>
        <end position="390"/>
    </location>
</feature>
<feature type="disulfide bond" evidence="3">
    <location>
        <begin position="352"/>
        <end position="374"/>
    </location>
</feature>
<feature type="disulfide bond" evidence="3">
    <location>
        <begin position="354"/>
        <end position="357"/>
    </location>
</feature>
<feature type="non-terminal residue">
    <location>
        <position position="411"/>
    </location>
</feature>
<proteinExistence type="evidence at transcript level"/>
<dbReference type="EC" id="3.4.24.-"/>
<dbReference type="EMBL" id="HQ731071">
    <property type="protein sequence ID" value="ADV71357.1"/>
    <property type="molecule type" value="mRNA"/>
</dbReference>
<dbReference type="SMR" id="E9NW28"/>
<dbReference type="MEROPS" id="M12.155"/>
<dbReference type="GO" id="GO:0005576">
    <property type="term" value="C:extracellular region"/>
    <property type="evidence" value="ECO:0007669"/>
    <property type="project" value="UniProtKB-SubCell"/>
</dbReference>
<dbReference type="GO" id="GO:0005886">
    <property type="term" value="C:plasma membrane"/>
    <property type="evidence" value="ECO:0007669"/>
    <property type="project" value="TreeGrafter"/>
</dbReference>
<dbReference type="GO" id="GO:0046872">
    <property type="term" value="F:metal ion binding"/>
    <property type="evidence" value="ECO:0007669"/>
    <property type="project" value="UniProtKB-KW"/>
</dbReference>
<dbReference type="GO" id="GO:0004222">
    <property type="term" value="F:metalloendopeptidase activity"/>
    <property type="evidence" value="ECO:0007669"/>
    <property type="project" value="InterPro"/>
</dbReference>
<dbReference type="GO" id="GO:0090729">
    <property type="term" value="F:toxin activity"/>
    <property type="evidence" value="ECO:0007669"/>
    <property type="project" value="UniProtKB-KW"/>
</dbReference>
<dbReference type="GO" id="GO:0006508">
    <property type="term" value="P:proteolysis"/>
    <property type="evidence" value="ECO:0007669"/>
    <property type="project" value="UniProtKB-KW"/>
</dbReference>
<dbReference type="CDD" id="cd04269">
    <property type="entry name" value="ZnMc_adamalysin_II_like"/>
    <property type="match status" value="1"/>
</dbReference>
<dbReference type="FunFam" id="3.40.390.10:FF:000002">
    <property type="entry name" value="Disintegrin and metalloproteinase domain-containing protein 22"/>
    <property type="match status" value="1"/>
</dbReference>
<dbReference type="Gene3D" id="3.40.390.10">
    <property type="entry name" value="Collagenase (Catalytic Domain)"/>
    <property type="match status" value="1"/>
</dbReference>
<dbReference type="InterPro" id="IPR024079">
    <property type="entry name" value="MetalloPept_cat_dom_sf"/>
</dbReference>
<dbReference type="InterPro" id="IPR001590">
    <property type="entry name" value="Peptidase_M12B"/>
</dbReference>
<dbReference type="InterPro" id="IPR002870">
    <property type="entry name" value="Peptidase_M12B_N"/>
</dbReference>
<dbReference type="InterPro" id="IPR034027">
    <property type="entry name" value="Reprolysin_adamalysin"/>
</dbReference>
<dbReference type="PANTHER" id="PTHR11905">
    <property type="entry name" value="ADAM A DISINTEGRIN AND METALLOPROTEASE DOMAIN"/>
    <property type="match status" value="1"/>
</dbReference>
<dbReference type="PANTHER" id="PTHR11905:SF32">
    <property type="entry name" value="DISINTEGRIN AND METALLOPROTEINASE DOMAIN-CONTAINING PROTEIN 28"/>
    <property type="match status" value="1"/>
</dbReference>
<dbReference type="Pfam" id="PF01562">
    <property type="entry name" value="Pep_M12B_propep"/>
    <property type="match status" value="1"/>
</dbReference>
<dbReference type="Pfam" id="PF01421">
    <property type="entry name" value="Reprolysin"/>
    <property type="match status" value="1"/>
</dbReference>
<dbReference type="SUPFAM" id="SSF55486">
    <property type="entry name" value="Metalloproteases ('zincins'), catalytic domain"/>
    <property type="match status" value="1"/>
</dbReference>
<dbReference type="PROSITE" id="PS50215">
    <property type="entry name" value="ADAM_MEPRO"/>
    <property type="match status" value="1"/>
</dbReference>
<dbReference type="PROSITE" id="PS00142">
    <property type="entry name" value="ZINC_PROTEASE"/>
    <property type="match status" value="1"/>
</dbReference>